<gene>
    <name evidence="2" type="primary">atpF2</name>
    <name evidence="2" type="synonym">atpG</name>
    <name type="ordered locus">PCC_0202</name>
</gene>
<dbReference type="EMBL" id="CP000815">
    <property type="protein sequence ID" value="ACB42652.1"/>
    <property type="molecule type" value="Genomic_DNA"/>
</dbReference>
<dbReference type="RefSeq" id="YP_002048862.1">
    <property type="nucleotide sequence ID" value="NC_011087.1"/>
</dbReference>
<dbReference type="SMR" id="B1X3Y3"/>
<dbReference type="GeneID" id="6481242"/>
<dbReference type="GO" id="GO:0070118">
    <property type="term" value="C:organellar chromatophore thylakoid membrane"/>
    <property type="evidence" value="ECO:0007669"/>
    <property type="project" value="UniProtKB-SubCell"/>
</dbReference>
<dbReference type="GO" id="GO:0005886">
    <property type="term" value="C:plasma membrane"/>
    <property type="evidence" value="ECO:0007669"/>
    <property type="project" value="UniProtKB-UniRule"/>
</dbReference>
<dbReference type="GO" id="GO:0009536">
    <property type="term" value="C:plastid"/>
    <property type="evidence" value="ECO:0007669"/>
    <property type="project" value="UniProtKB-KW"/>
</dbReference>
<dbReference type="GO" id="GO:0045259">
    <property type="term" value="C:proton-transporting ATP synthase complex"/>
    <property type="evidence" value="ECO:0007669"/>
    <property type="project" value="UniProtKB-KW"/>
</dbReference>
<dbReference type="GO" id="GO:0046933">
    <property type="term" value="F:proton-transporting ATP synthase activity, rotational mechanism"/>
    <property type="evidence" value="ECO:0007669"/>
    <property type="project" value="UniProtKB-UniRule"/>
</dbReference>
<dbReference type="GO" id="GO:0046961">
    <property type="term" value="F:proton-transporting ATPase activity, rotational mechanism"/>
    <property type="evidence" value="ECO:0007669"/>
    <property type="project" value="TreeGrafter"/>
</dbReference>
<dbReference type="CDD" id="cd06503">
    <property type="entry name" value="ATP-synt_Fo_b"/>
    <property type="match status" value="1"/>
</dbReference>
<dbReference type="Gene3D" id="1.20.5.620">
    <property type="entry name" value="F1F0 ATP synthase subunit B, membrane domain"/>
    <property type="match status" value="1"/>
</dbReference>
<dbReference type="HAMAP" id="MF_01398">
    <property type="entry name" value="ATP_synth_b_bprime"/>
    <property type="match status" value="1"/>
</dbReference>
<dbReference type="HAMAP" id="MF_01399">
    <property type="entry name" value="ATP_synth_bprime"/>
    <property type="match status" value="1"/>
</dbReference>
<dbReference type="InterPro" id="IPR034679">
    <property type="entry name" value="ATP_synth_b"/>
</dbReference>
<dbReference type="InterPro" id="IPR028987">
    <property type="entry name" value="ATP_synth_B-like_membr_sf"/>
</dbReference>
<dbReference type="InterPro" id="IPR002146">
    <property type="entry name" value="ATP_synth_b/b'su_bac/chlpt"/>
</dbReference>
<dbReference type="InterPro" id="IPR050059">
    <property type="entry name" value="ATP_synthase_B_chain"/>
</dbReference>
<dbReference type="NCBIfam" id="NF005607">
    <property type="entry name" value="PRK07353.1"/>
    <property type="match status" value="1"/>
</dbReference>
<dbReference type="PANTHER" id="PTHR33445">
    <property type="entry name" value="ATP SYNTHASE SUBUNIT B', CHLOROPLASTIC"/>
    <property type="match status" value="1"/>
</dbReference>
<dbReference type="PANTHER" id="PTHR33445:SF2">
    <property type="entry name" value="ATP SYNTHASE SUBUNIT B', CHLOROPLASTIC"/>
    <property type="match status" value="1"/>
</dbReference>
<dbReference type="Pfam" id="PF00430">
    <property type="entry name" value="ATP-synt_B"/>
    <property type="match status" value="1"/>
</dbReference>
<dbReference type="SUPFAM" id="SSF81573">
    <property type="entry name" value="F1F0 ATP synthase subunit B, membrane domain"/>
    <property type="match status" value="1"/>
</dbReference>
<feature type="chain" id="PRO_0000369058" description="ATP synthase subunit b', organellar chromatophore">
    <location>
        <begin position="1"/>
        <end position="156"/>
    </location>
</feature>
<feature type="transmembrane region" description="Helical" evidence="2">
    <location>
        <begin position="23"/>
        <end position="43"/>
    </location>
</feature>
<organism>
    <name type="scientific">Paulinella chromatophora</name>
    <dbReference type="NCBI Taxonomy" id="39717"/>
    <lineage>
        <taxon>Eukaryota</taxon>
        <taxon>Sar</taxon>
        <taxon>Rhizaria</taxon>
        <taxon>Cercozoa</taxon>
        <taxon>Imbricatea</taxon>
        <taxon>Silicofilosea</taxon>
        <taxon>Euglyphida</taxon>
        <taxon>Paulinellidae</taxon>
        <taxon>Paulinella</taxon>
    </lineage>
</organism>
<evidence type="ECO:0000250" key="1"/>
<evidence type="ECO:0000255" key="2">
    <source>
        <dbReference type="HAMAP-Rule" id="MF_01399"/>
    </source>
</evidence>
<geneLocation type="organellar chromatophore"/>
<protein>
    <recommendedName>
        <fullName evidence="2">ATP synthase subunit b', organellar chromatophore</fullName>
    </recommendedName>
    <alternativeName>
        <fullName evidence="2">ATP synthase F(0) sector subunit b'</fullName>
    </alternativeName>
    <alternativeName>
        <fullName evidence="2">ATPase subunit II</fullName>
    </alternativeName>
</protein>
<proteinExistence type="inferred from homology"/>
<sequence length="156" mass="17512">MTSWLLLAEAGVPEGGLFDLDATLPLMAIQVVFLTFILNAIFFRPIGRTVEERENYVASSRADAKQKLAQVERLEANLTEQLRGARKQSQTVIAEAEEEVNRLYQEALRMAQAEANNIRESSRREIEIQKAAAIKSLQGDVDRLSNLIVDRLLASR</sequence>
<keyword id="KW-0066">ATP synthesis</keyword>
<keyword id="KW-0138">CF(0)</keyword>
<keyword id="KW-0375">Hydrogen ion transport</keyword>
<keyword id="KW-0406">Ion transport</keyword>
<keyword id="KW-0472">Membrane</keyword>
<keyword id="KW-0994">Organellar chromatophore</keyword>
<keyword id="KW-0934">Plastid</keyword>
<keyword id="KW-0793">Thylakoid</keyword>
<keyword id="KW-0812">Transmembrane</keyword>
<keyword id="KW-1133">Transmembrane helix</keyword>
<keyword id="KW-0813">Transport</keyword>
<comment type="function">
    <text evidence="2">F(1)F(0) ATP synthase produces ATP from ADP in the presence of a proton or sodium gradient. F-type ATPases consist of two structural domains, F(1) containing the extramembraneous catalytic core and F(0) containing the membrane proton channel, linked together by a central stalk and a peripheral stalk. During catalysis, ATP synthesis in the catalytic domain of F(1) is coupled via a rotary mechanism of the central stalk subunits to proton translocation.</text>
</comment>
<comment type="function">
    <text evidence="2">Component of the F(0) channel, it forms part of the peripheral stalk, linking F(1) to F(0). The b'-subunit is a diverged and duplicated form of b found in plants and photosynthetic bacteria.</text>
</comment>
<comment type="subunit">
    <text evidence="2">F-type ATPases have 2 components, F(1) - the catalytic core - and F(0) - the membrane proton channel. F(1) has five subunits: alpha(3), beta(3), gamma(1), delta(1), epsilon(1). F(0) has four main subunits: a(1), b(1), b'(1) and c(10-14). The alpha and beta chains form an alternating ring which encloses part of the gamma chain. F(1) is attached to F(0) by a central stalk formed by the gamma and epsilon chains, while a peripheral stalk is formed by the delta, b and b' chains.</text>
</comment>
<comment type="subcellular location">
    <subcellularLocation>
        <location evidence="1">Plastid</location>
        <location evidence="1">Organellar chromatophore thylakoid membrane</location>
        <topology evidence="2">Single-pass membrane protein</topology>
    </subcellularLocation>
</comment>
<comment type="miscellaneous">
    <text>In plastids the F-type ATPase is also known as CF(1)CF(0).</text>
</comment>
<comment type="similarity">
    <text evidence="2">Belongs to the ATPase B chain family.</text>
</comment>
<accession>B1X3Y3</accession>
<name>ATPF2_PAUCH</name>
<reference key="1">
    <citation type="journal article" date="2008" name="Curr. Biol.">
        <title>Chromatophore genome sequence of Paulinella sheds light on acquisition of photosynthesis by eukaryotes.</title>
        <authorList>
            <person name="Nowack E.C.M."/>
            <person name="Melkonian M."/>
            <person name="Gloeckner G."/>
        </authorList>
    </citation>
    <scope>NUCLEOTIDE SEQUENCE [LARGE SCALE GENOMIC DNA]</scope>
</reference>